<organism>
    <name type="scientific">Gluconacetobacter diazotrophicus (strain ATCC 49037 / DSM 5601 / CCUG 37298 / CIP 103539 / LMG 7603 / PAl5)</name>
    <dbReference type="NCBI Taxonomy" id="272568"/>
    <lineage>
        <taxon>Bacteria</taxon>
        <taxon>Pseudomonadati</taxon>
        <taxon>Pseudomonadota</taxon>
        <taxon>Alphaproteobacteria</taxon>
        <taxon>Acetobacterales</taxon>
        <taxon>Acetobacteraceae</taxon>
        <taxon>Gluconacetobacter</taxon>
    </lineage>
</organism>
<sequence length="395" mass="40976">MAESVAARVASLRRFLGSPSGGACVLLLASLAGFVLANSPWAAGYTALTTTPLTLSVLGKRGPDTIDAWVSDGFMTLFFLVVILEIKTEIVTGHLSSPRRVALPLIGALGGMIVPALTYLLVTCGHPEATRGWAIPVATDAAFTLPIILALGRHVSAGARAWLMALAIFDDVLGIVVIAVFYGNALYWPALAAAVVVTAALIGANRIGIRTVWGYATGCILLWIALLGSGLHPTLAGVITGLCLPATALGRNVGQATPLDRAASALTPVVTWVILPLFGFMNVGVSLRGIHPDMMVDAVPLGIMSGLLIGKPVGVFSATLLSTRLRIATLPAETSMGKVFGLSLLCGIGFTISLFIANLSFPDSGLVIPAKMGIFAGSVLSALAGWLWLRFSPEQ</sequence>
<evidence type="ECO:0000255" key="1">
    <source>
        <dbReference type="HAMAP-Rule" id="MF_01844"/>
    </source>
</evidence>
<name>NHAA_GLUDA</name>
<gene>
    <name evidence="1" type="primary">nhaA</name>
    <name type="ordered locus">GDI0224</name>
    <name type="ordered locus">Gdia_2293</name>
</gene>
<comment type="function">
    <text evidence="1">Na(+)/H(+) antiporter that extrudes sodium in exchange for external protons.</text>
</comment>
<comment type="catalytic activity">
    <reaction evidence="1">
        <text>Na(+)(in) + 2 H(+)(out) = Na(+)(out) + 2 H(+)(in)</text>
        <dbReference type="Rhea" id="RHEA:29251"/>
        <dbReference type="ChEBI" id="CHEBI:15378"/>
        <dbReference type="ChEBI" id="CHEBI:29101"/>
    </reaction>
    <physiologicalReaction direction="left-to-right" evidence="1">
        <dbReference type="Rhea" id="RHEA:29252"/>
    </physiologicalReaction>
</comment>
<comment type="subcellular location">
    <subcellularLocation>
        <location evidence="1">Cell inner membrane</location>
        <topology evidence="1">Multi-pass membrane protein</topology>
    </subcellularLocation>
</comment>
<comment type="similarity">
    <text evidence="1">Belongs to the NhaA Na(+)/H(+) (TC 2.A.33) antiporter family.</text>
</comment>
<feature type="chain" id="PRO_0000334308" description="Na(+)/H(+) antiporter NhaA">
    <location>
        <begin position="1"/>
        <end position="395"/>
    </location>
</feature>
<feature type="transmembrane region" description="Helical" evidence="1">
    <location>
        <begin position="15"/>
        <end position="35"/>
    </location>
</feature>
<feature type="transmembrane region" description="Helical" evidence="1">
    <location>
        <begin position="66"/>
        <end position="86"/>
    </location>
</feature>
<feature type="transmembrane region" description="Helical" evidence="1">
    <location>
        <begin position="101"/>
        <end position="121"/>
    </location>
</feature>
<feature type="transmembrane region" description="Helical" evidence="1">
    <location>
        <begin position="132"/>
        <end position="152"/>
    </location>
</feature>
<feature type="transmembrane region" description="Helical" evidence="1">
    <location>
        <begin position="161"/>
        <end position="181"/>
    </location>
</feature>
<feature type="transmembrane region" description="Helical" evidence="1">
    <location>
        <begin position="184"/>
        <end position="204"/>
    </location>
</feature>
<feature type="transmembrane region" description="Helical" evidence="1">
    <location>
        <begin position="219"/>
        <end position="239"/>
    </location>
</feature>
<feature type="transmembrane region" description="Helical" evidence="1">
    <location>
        <begin position="265"/>
        <end position="285"/>
    </location>
</feature>
<feature type="transmembrane region" description="Helical" evidence="1">
    <location>
        <begin position="301"/>
        <end position="321"/>
    </location>
</feature>
<feature type="transmembrane region" description="Helical" evidence="1">
    <location>
        <begin position="339"/>
        <end position="359"/>
    </location>
</feature>
<feature type="transmembrane region" description="Helical" evidence="1">
    <location>
        <begin position="366"/>
        <end position="386"/>
    </location>
</feature>
<protein>
    <recommendedName>
        <fullName evidence="1">Na(+)/H(+) antiporter NhaA</fullName>
    </recommendedName>
    <alternativeName>
        <fullName evidence="1">Sodium/proton antiporter NhaA</fullName>
    </alternativeName>
</protein>
<dbReference type="EMBL" id="AM889285">
    <property type="protein sequence ID" value="CAP54167.1"/>
    <property type="molecule type" value="Genomic_DNA"/>
</dbReference>
<dbReference type="EMBL" id="CP001189">
    <property type="protein sequence ID" value="ACI52048.1"/>
    <property type="molecule type" value="Genomic_DNA"/>
</dbReference>
<dbReference type="RefSeq" id="WP_012222463.1">
    <property type="nucleotide sequence ID" value="NC_010125.1"/>
</dbReference>
<dbReference type="SMR" id="A9H2L4"/>
<dbReference type="STRING" id="272568.GDI0224"/>
<dbReference type="KEGG" id="gdi:GDI0224"/>
<dbReference type="KEGG" id="gdj:Gdia_2293"/>
<dbReference type="eggNOG" id="COG3004">
    <property type="taxonomic scope" value="Bacteria"/>
</dbReference>
<dbReference type="HOGENOM" id="CLU_015803_1_0_5"/>
<dbReference type="OrthoDB" id="9808135at2"/>
<dbReference type="Proteomes" id="UP000001176">
    <property type="component" value="Chromosome"/>
</dbReference>
<dbReference type="GO" id="GO:0005886">
    <property type="term" value="C:plasma membrane"/>
    <property type="evidence" value="ECO:0007669"/>
    <property type="project" value="UniProtKB-SubCell"/>
</dbReference>
<dbReference type="GO" id="GO:0015385">
    <property type="term" value="F:sodium:proton antiporter activity"/>
    <property type="evidence" value="ECO:0007669"/>
    <property type="project" value="TreeGrafter"/>
</dbReference>
<dbReference type="GO" id="GO:0006885">
    <property type="term" value="P:regulation of pH"/>
    <property type="evidence" value="ECO:0007669"/>
    <property type="project" value="InterPro"/>
</dbReference>
<dbReference type="Gene3D" id="1.20.1530.10">
    <property type="entry name" value="Na+/H+ antiporter like domain"/>
    <property type="match status" value="1"/>
</dbReference>
<dbReference type="HAMAP" id="MF_01844">
    <property type="entry name" value="NhaA"/>
    <property type="match status" value="1"/>
</dbReference>
<dbReference type="InterPro" id="IPR023171">
    <property type="entry name" value="Na/H_antiporter_dom_sf"/>
</dbReference>
<dbReference type="InterPro" id="IPR004670">
    <property type="entry name" value="NhaA"/>
</dbReference>
<dbReference type="NCBIfam" id="TIGR00773">
    <property type="entry name" value="NhaA"/>
    <property type="match status" value="1"/>
</dbReference>
<dbReference type="PANTHER" id="PTHR30341:SF0">
    <property type="entry name" value="NA(+)_H(+) ANTIPORTER NHAA"/>
    <property type="match status" value="1"/>
</dbReference>
<dbReference type="PANTHER" id="PTHR30341">
    <property type="entry name" value="SODIUM ION/PROTON ANTIPORTER NHAA-RELATED"/>
    <property type="match status" value="1"/>
</dbReference>
<dbReference type="Pfam" id="PF06965">
    <property type="entry name" value="Na_H_antiport_1"/>
    <property type="match status" value="1"/>
</dbReference>
<keyword id="KW-0050">Antiport</keyword>
<keyword id="KW-0997">Cell inner membrane</keyword>
<keyword id="KW-1003">Cell membrane</keyword>
<keyword id="KW-0406">Ion transport</keyword>
<keyword id="KW-0472">Membrane</keyword>
<keyword id="KW-1185">Reference proteome</keyword>
<keyword id="KW-0915">Sodium</keyword>
<keyword id="KW-0739">Sodium transport</keyword>
<keyword id="KW-0812">Transmembrane</keyword>
<keyword id="KW-1133">Transmembrane helix</keyword>
<keyword id="KW-0813">Transport</keyword>
<reference key="1">
    <citation type="journal article" date="2009" name="BMC Genomics">
        <title>Complete genome sequence of the sugarcane nitrogen-fixing endophyte Gluconacetobacter diazotrophicus Pal5.</title>
        <authorList>
            <person name="Bertalan M."/>
            <person name="Albano R."/>
            <person name="de Padua V."/>
            <person name="Rouws L."/>
            <person name="Rojas C."/>
            <person name="Hemerly A."/>
            <person name="Teixeira K."/>
            <person name="Schwab S."/>
            <person name="Araujo J."/>
            <person name="Oliveira A."/>
            <person name="Franca L."/>
            <person name="Magalhaes V."/>
            <person name="Alqueres S."/>
            <person name="Cardoso A."/>
            <person name="Almeida W."/>
            <person name="Loureiro M.M."/>
            <person name="Nogueira E."/>
            <person name="Cidade D."/>
            <person name="Oliveira D."/>
            <person name="Simao T."/>
            <person name="Macedo J."/>
            <person name="Valadao A."/>
            <person name="Dreschsel M."/>
            <person name="Freitas F."/>
            <person name="Vidal M."/>
            <person name="Guedes H."/>
            <person name="Rodrigues E."/>
            <person name="Meneses C."/>
            <person name="Brioso P."/>
            <person name="Pozzer L."/>
            <person name="Figueiredo D."/>
            <person name="Montano H."/>
            <person name="Junior J."/>
            <person name="de Souza Filho G."/>
            <person name="Martin Quintana Flores V."/>
            <person name="Ferreira B."/>
            <person name="Branco A."/>
            <person name="Gonzalez P."/>
            <person name="Guillobel H."/>
            <person name="Lemos M."/>
            <person name="Seibel L."/>
            <person name="Macedo J."/>
            <person name="Alves-Ferreira M."/>
            <person name="Sachetto-Martins G."/>
            <person name="Coelho A."/>
            <person name="Santos E."/>
            <person name="Amaral G."/>
            <person name="Neves A."/>
            <person name="Pacheco A.B."/>
            <person name="Carvalho D."/>
            <person name="Lery L."/>
            <person name="Bisch P."/>
            <person name="Rossle S.C."/>
            <person name="Urmenyi T."/>
            <person name="Rael Pereira A."/>
            <person name="Silva R."/>
            <person name="Rondinelli E."/>
            <person name="von Kruger W."/>
            <person name="Martins O."/>
            <person name="Baldani J.I."/>
            <person name="Ferreira P.C."/>
        </authorList>
    </citation>
    <scope>NUCLEOTIDE SEQUENCE [LARGE SCALE GENOMIC DNA]</scope>
    <source>
        <strain>ATCC 49037 / DSM 5601 / CCUG 37298 / CIP 103539 / LMG 7603 / PAl5</strain>
    </source>
</reference>
<reference key="2">
    <citation type="journal article" date="2010" name="Stand. Genomic Sci.">
        <title>Two genome sequences of the same bacterial strain, Gluconacetobacter diazotrophicus PAl 5, suggest a new standard in genome sequence submission.</title>
        <authorList>
            <person name="Giongo A."/>
            <person name="Tyler H.L."/>
            <person name="Zipperer U.N."/>
            <person name="Triplett E.W."/>
        </authorList>
    </citation>
    <scope>NUCLEOTIDE SEQUENCE [LARGE SCALE GENOMIC DNA]</scope>
    <source>
        <strain>ATCC 49037 / DSM 5601 / CCUG 37298 / CIP 103539 / LMG 7603 / PAl5</strain>
    </source>
</reference>
<proteinExistence type="inferred from homology"/>
<accession>A9H2L4</accession>
<accession>B5ZEQ8</accession>